<protein>
    <recommendedName>
        <fullName evidence="1">Acetaldehyde dehydrogenase 1</fullName>
        <ecNumber evidence="1">1.2.1.10</ecNumber>
    </recommendedName>
    <alternativeName>
        <fullName evidence="1">Acetaldehyde dehydrogenase [acetylating] 1</fullName>
    </alternativeName>
</protein>
<reference key="1">
    <citation type="submission" date="2007-10" db="EMBL/GenBank/DDBJ databases">
        <title>Complete sequence of Salinispora arenicola CNS-205.</title>
        <authorList>
            <consortium name="US DOE Joint Genome Institute"/>
            <person name="Copeland A."/>
            <person name="Lucas S."/>
            <person name="Lapidus A."/>
            <person name="Barry K."/>
            <person name="Glavina del Rio T."/>
            <person name="Dalin E."/>
            <person name="Tice H."/>
            <person name="Pitluck S."/>
            <person name="Foster B."/>
            <person name="Schmutz J."/>
            <person name="Larimer F."/>
            <person name="Land M."/>
            <person name="Hauser L."/>
            <person name="Kyrpides N."/>
            <person name="Ivanova N."/>
            <person name="Jensen P.R."/>
            <person name="Moore B.S."/>
            <person name="Penn K."/>
            <person name="Jenkins C."/>
            <person name="Udwary D."/>
            <person name="Xiang L."/>
            <person name="Gontang E."/>
            <person name="Richardson P."/>
        </authorList>
    </citation>
    <scope>NUCLEOTIDE SEQUENCE [LARGE SCALE GENOMIC DNA]</scope>
    <source>
        <strain>CNS-205</strain>
    </source>
</reference>
<feature type="chain" id="PRO_0000387736" description="Acetaldehyde dehydrogenase 1">
    <location>
        <begin position="1"/>
        <end position="308"/>
    </location>
</feature>
<feature type="active site" description="Acyl-thioester intermediate" evidence="1">
    <location>
        <position position="128"/>
    </location>
</feature>
<feature type="binding site" evidence="1">
    <location>
        <begin position="10"/>
        <end position="13"/>
    </location>
    <ligand>
        <name>NAD(+)</name>
        <dbReference type="ChEBI" id="CHEBI:57540"/>
    </ligand>
</feature>
<feature type="binding site" evidence="1">
    <location>
        <begin position="159"/>
        <end position="167"/>
    </location>
    <ligand>
        <name>NAD(+)</name>
        <dbReference type="ChEBI" id="CHEBI:57540"/>
    </ligand>
</feature>
<feature type="binding site" evidence="1">
    <location>
        <position position="285"/>
    </location>
    <ligand>
        <name>NAD(+)</name>
        <dbReference type="ChEBI" id="CHEBI:57540"/>
    </ligand>
</feature>
<sequence length="308" mass="32093">MSVGVAVLGSGNIGTDLMIKVLRLSDSLRMVAMAGIDSGSDGLARARRLGVTTTADGVAGLVTLPEFADVELVFDATSAGAHRHHDSVLRAYGRIVVDLTPAAIGPYVVPPVNLDEHLAETNVNMVTCGGQATVPIVAAIGRVTPVAYGEIVASIASKSAGPGTRANIDEFTETTARAIEVVGGADRGKAIIVLNPADPPLLMRDTVYCLCPDTDADRSAIIAAVTDMVGAVQEYVPGYRLKQEVQFDRVDSYLPALGGHLTGLQVSVFLEVSGAGHYLPEYAGNLDIMTSAALRTAERLIGRRAVTA</sequence>
<organism>
    <name type="scientific">Salinispora arenicola (strain CNS-205)</name>
    <dbReference type="NCBI Taxonomy" id="391037"/>
    <lineage>
        <taxon>Bacteria</taxon>
        <taxon>Bacillati</taxon>
        <taxon>Actinomycetota</taxon>
        <taxon>Actinomycetes</taxon>
        <taxon>Micromonosporales</taxon>
        <taxon>Micromonosporaceae</taxon>
        <taxon>Salinispora</taxon>
    </lineage>
</organism>
<keyword id="KW-0058">Aromatic hydrocarbons catabolism</keyword>
<keyword id="KW-0520">NAD</keyword>
<keyword id="KW-0560">Oxidoreductase</keyword>
<dbReference type="EC" id="1.2.1.10" evidence="1"/>
<dbReference type="EMBL" id="CP000850">
    <property type="protein sequence ID" value="ABV99692.1"/>
    <property type="molecule type" value="Genomic_DNA"/>
</dbReference>
<dbReference type="SMR" id="A8M1N1"/>
<dbReference type="STRING" id="391037.Sare_3901"/>
<dbReference type="KEGG" id="saq:Sare_3901"/>
<dbReference type="PATRIC" id="fig|391037.6.peg.3933"/>
<dbReference type="eggNOG" id="COG4569">
    <property type="taxonomic scope" value="Bacteria"/>
</dbReference>
<dbReference type="HOGENOM" id="CLU_062208_0_0_11"/>
<dbReference type="OrthoDB" id="9786743at2"/>
<dbReference type="GO" id="GO:0008774">
    <property type="term" value="F:acetaldehyde dehydrogenase (acetylating) activity"/>
    <property type="evidence" value="ECO:0007669"/>
    <property type="project" value="UniProtKB-UniRule"/>
</dbReference>
<dbReference type="GO" id="GO:0051287">
    <property type="term" value="F:NAD binding"/>
    <property type="evidence" value="ECO:0007669"/>
    <property type="project" value="UniProtKB-UniRule"/>
</dbReference>
<dbReference type="GO" id="GO:0009056">
    <property type="term" value="P:catabolic process"/>
    <property type="evidence" value="ECO:0007669"/>
    <property type="project" value="UniProtKB-KW"/>
</dbReference>
<dbReference type="CDD" id="cd23933">
    <property type="entry name" value="ALDH_C"/>
    <property type="match status" value="1"/>
</dbReference>
<dbReference type="Gene3D" id="3.30.360.10">
    <property type="entry name" value="Dihydrodipicolinate Reductase, domain 2"/>
    <property type="match status" value="1"/>
</dbReference>
<dbReference type="Gene3D" id="3.40.50.720">
    <property type="entry name" value="NAD(P)-binding Rossmann-like Domain"/>
    <property type="match status" value="1"/>
</dbReference>
<dbReference type="HAMAP" id="MF_01657">
    <property type="entry name" value="Ac_ald_DH_ac"/>
    <property type="match status" value="1"/>
</dbReference>
<dbReference type="InterPro" id="IPR003361">
    <property type="entry name" value="Acetaldehyde_dehydrogenase"/>
</dbReference>
<dbReference type="InterPro" id="IPR015426">
    <property type="entry name" value="Acetylaldehyde_DH_C"/>
</dbReference>
<dbReference type="InterPro" id="IPR036291">
    <property type="entry name" value="NAD(P)-bd_dom_sf"/>
</dbReference>
<dbReference type="InterPro" id="IPR000534">
    <property type="entry name" value="Semialdehyde_DH_NAD-bd"/>
</dbReference>
<dbReference type="NCBIfam" id="TIGR03215">
    <property type="entry name" value="ac_ald_DH_ac"/>
    <property type="match status" value="1"/>
</dbReference>
<dbReference type="NCBIfam" id="NF006157">
    <property type="entry name" value="PRK08300.1"/>
    <property type="match status" value="1"/>
</dbReference>
<dbReference type="Pfam" id="PF09290">
    <property type="entry name" value="AcetDehyd-dimer"/>
    <property type="match status" value="1"/>
</dbReference>
<dbReference type="Pfam" id="PF01118">
    <property type="entry name" value="Semialdhyde_dh"/>
    <property type="match status" value="1"/>
</dbReference>
<dbReference type="PIRSF" id="PIRSF015689">
    <property type="entry name" value="Actaldh_dh_actl"/>
    <property type="match status" value="1"/>
</dbReference>
<dbReference type="SMART" id="SM00859">
    <property type="entry name" value="Semialdhyde_dh"/>
    <property type="match status" value="1"/>
</dbReference>
<dbReference type="SUPFAM" id="SSF55347">
    <property type="entry name" value="Glyceraldehyde-3-phosphate dehydrogenase-like, C-terminal domain"/>
    <property type="match status" value="1"/>
</dbReference>
<dbReference type="SUPFAM" id="SSF51735">
    <property type="entry name" value="NAD(P)-binding Rossmann-fold domains"/>
    <property type="match status" value="1"/>
</dbReference>
<comment type="catalytic activity">
    <reaction evidence="1">
        <text>acetaldehyde + NAD(+) + CoA = acetyl-CoA + NADH + H(+)</text>
        <dbReference type="Rhea" id="RHEA:23288"/>
        <dbReference type="ChEBI" id="CHEBI:15343"/>
        <dbReference type="ChEBI" id="CHEBI:15378"/>
        <dbReference type="ChEBI" id="CHEBI:57287"/>
        <dbReference type="ChEBI" id="CHEBI:57288"/>
        <dbReference type="ChEBI" id="CHEBI:57540"/>
        <dbReference type="ChEBI" id="CHEBI:57945"/>
        <dbReference type="EC" id="1.2.1.10"/>
    </reaction>
</comment>
<comment type="similarity">
    <text evidence="1">Belongs to the acetaldehyde dehydrogenase family.</text>
</comment>
<accession>A8M1N1</accession>
<proteinExistence type="inferred from homology"/>
<gene>
    <name type="ordered locus">Sare_3901</name>
</gene>
<evidence type="ECO:0000255" key="1">
    <source>
        <dbReference type="HAMAP-Rule" id="MF_01657"/>
    </source>
</evidence>
<name>ACDH1_SALAI</name>